<dbReference type="EC" id="1.7.99.1" evidence="1"/>
<dbReference type="EMBL" id="CP000742">
    <property type="protein sequence ID" value="ABR55487.1"/>
    <property type="molecule type" value="Genomic_DNA"/>
</dbReference>
<dbReference type="RefSeq" id="WP_012066401.1">
    <property type="nucleotide sequence ID" value="NC_009634.1"/>
</dbReference>
<dbReference type="SMR" id="A6USL5"/>
<dbReference type="STRING" id="406327.Mevan_1595"/>
<dbReference type="GeneID" id="5325205"/>
<dbReference type="KEGG" id="mvn:Mevan_1595"/>
<dbReference type="eggNOG" id="arCOG02430">
    <property type="taxonomic scope" value="Archaea"/>
</dbReference>
<dbReference type="HOGENOM" id="CLU_038344_2_0_2"/>
<dbReference type="OrthoDB" id="21311at2157"/>
<dbReference type="Proteomes" id="UP000001107">
    <property type="component" value="Chromosome"/>
</dbReference>
<dbReference type="GO" id="GO:0005737">
    <property type="term" value="C:cytoplasm"/>
    <property type="evidence" value="ECO:0007669"/>
    <property type="project" value="UniProtKB-SubCell"/>
</dbReference>
<dbReference type="GO" id="GO:0051539">
    <property type="term" value="F:4 iron, 4 sulfur cluster binding"/>
    <property type="evidence" value="ECO:0007669"/>
    <property type="project" value="UniProtKB-KW"/>
</dbReference>
<dbReference type="GO" id="GO:0050418">
    <property type="term" value="F:hydroxylamine reductase activity"/>
    <property type="evidence" value="ECO:0007669"/>
    <property type="project" value="UniProtKB-UniRule"/>
</dbReference>
<dbReference type="GO" id="GO:0046872">
    <property type="term" value="F:metal ion binding"/>
    <property type="evidence" value="ECO:0007669"/>
    <property type="project" value="UniProtKB-KW"/>
</dbReference>
<dbReference type="GO" id="GO:0004601">
    <property type="term" value="F:peroxidase activity"/>
    <property type="evidence" value="ECO:0007669"/>
    <property type="project" value="TreeGrafter"/>
</dbReference>
<dbReference type="GO" id="GO:0042542">
    <property type="term" value="P:response to hydrogen peroxide"/>
    <property type="evidence" value="ECO:0007669"/>
    <property type="project" value="TreeGrafter"/>
</dbReference>
<dbReference type="CDD" id="cd01914">
    <property type="entry name" value="HCP"/>
    <property type="match status" value="1"/>
</dbReference>
<dbReference type="FunFam" id="1.20.1270.20:FF:000001">
    <property type="entry name" value="Hydroxylamine reductase"/>
    <property type="match status" value="1"/>
</dbReference>
<dbReference type="FunFam" id="3.40.50.2030:FF:000001">
    <property type="entry name" value="Hydroxylamine reductase"/>
    <property type="match status" value="1"/>
</dbReference>
<dbReference type="FunFam" id="3.40.50.2030:FF:000002">
    <property type="entry name" value="Hydroxylamine reductase"/>
    <property type="match status" value="1"/>
</dbReference>
<dbReference type="Gene3D" id="1.20.1270.20">
    <property type="match status" value="2"/>
</dbReference>
<dbReference type="Gene3D" id="3.40.50.2030">
    <property type="match status" value="2"/>
</dbReference>
<dbReference type="HAMAP" id="MF_00069">
    <property type="entry name" value="Hydroxylam_reduct"/>
    <property type="match status" value="1"/>
</dbReference>
<dbReference type="InterPro" id="IPR004137">
    <property type="entry name" value="HCP/CODH"/>
</dbReference>
<dbReference type="InterPro" id="IPR010048">
    <property type="entry name" value="Hydroxylam_reduct"/>
</dbReference>
<dbReference type="InterPro" id="IPR016099">
    <property type="entry name" value="Prismane-like_a/b-sand"/>
</dbReference>
<dbReference type="InterPro" id="IPR011254">
    <property type="entry name" value="Prismane-like_sf"/>
</dbReference>
<dbReference type="InterPro" id="IPR016100">
    <property type="entry name" value="Prismane_a-bundle"/>
</dbReference>
<dbReference type="NCBIfam" id="TIGR01703">
    <property type="entry name" value="hybrid_clust"/>
    <property type="match status" value="1"/>
</dbReference>
<dbReference type="NCBIfam" id="NF003658">
    <property type="entry name" value="PRK05290.1"/>
    <property type="match status" value="1"/>
</dbReference>
<dbReference type="PANTHER" id="PTHR30109">
    <property type="entry name" value="HYDROXYLAMINE REDUCTASE"/>
    <property type="match status" value="1"/>
</dbReference>
<dbReference type="PANTHER" id="PTHR30109:SF0">
    <property type="entry name" value="HYDROXYLAMINE REDUCTASE"/>
    <property type="match status" value="1"/>
</dbReference>
<dbReference type="Pfam" id="PF03063">
    <property type="entry name" value="Prismane"/>
    <property type="match status" value="1"/>
</dbReference>
<dbReference type="PIRSF" id="PIRSF000076">
    <property type="entry name" value="HCP"/>
    <property type="match status" value="1"/>
</dbReference>
<dbReference type="SUPFAM" id="SSF56821">
    <property type="entry name" value="Prismane protein-like"/>
    <property type="match status" value="1"/>
</dbReference>
<evidence type="ECO:0000255" key="1">
    <source>
        <dbReference type="HAMAP-Rule" id="MF_00069"/>
    </source>
</evidence>
<comment type="function">
    <text evidence="1">Catalyzes the reduction of hydroxylamine to form NH(3) and H(2)O.</text>
</comment>
<comment type="catalytic activity">
    <reaction evidence="1">
        <text>A + NH4(+) + H2O = hydroxylamine + AH2 + H(+)</text>
        <dbReference type="Rhea" id="RHEA:22052"/>
        <dbReference type="ChEBI" id="CHEBI:13193"/>
        <dbReference type="ChEBI" id="CHEBI:15377"/>
        <dbReference type="ChEBI" id="CHEBI:15378"/>
        <dbReference type="ChEBI" id="CHEBI:15429"/>
        <dbReference type="ChEBI" id="CHEBI:17499"/>
        <dbReference type="ChEBI" id="CHEBI:28938"/>
        <dbReference type="EC" id="1.7.99.1"/>
    </reaction>
</comment>
<comment type="cofactor">
    <cofactor evidence="1">
        <name>[4Fe-4S] cluster</name>
        <dbReference type="ChEBI" id="CHEBI:49883"/>
    </cofactor>
    <text evidence="1">Binds 1 [4Fe-4S] cluster.</text>
</comment>
<comment type="cofactor">
    <cofactor evidence="1">
        <name>hybrid [4Fe-2O-2S] cluster</name>
        <dbReference type="ChEBI" id="CHEBI:60519"/>
    </cofactor>
    <text evidence="1">Binds 1 hybrid [4Fe-2O-2S] cluster.</text>
</comment>
<comment type="subcellular location">
    <subcellularLocation>
        <location evidence="1">Cytoplasm</location>
    </subcellularLocation>
</comment>
<comment type="similarity">
    <text evidence="1">Belongs to the HCP family.</text>
</comment>
<reference key="1">
    <citation type="submission" date="2007-06" db="EMBL/GenBank/DDBJ databases">
        <title>Complete sequence of Methanococcus vannielii SB.</title>
        <authorList>
            <consortium name="US DOE Joint Genome Institute"/>
            <person name="Copeland A."/>
            <person name="Lucas S."/>
            <person name="Lapidus A."/>
            <person name="Barry K."/>
            <person name="Glavina del Rio T."/>
            <person name="Dalin E."/>
            <person name="Tice H."/>
            <person name="Pitluck S."/>
            <person name="Chain P."/>
            <person name="Malfatti S."/>
            <person name="Shin M."/>
            <person name="Vergez L."/>
            <person name="Schmutz J."/>
            <person name="Larimer F."/>
            <person name="Land M."/>
            <person name="Hauser L."/>
            <person name="Kyrpides N."/>
            <person name="Anderson I."/>
            <person name="Sieprawska-Lupa M."/>
            <person name="Whitman W.B."/>
            <person name="Richardson P."/>
        </authorList>
    </citation>
    <scope>NUCLEOTIDE SEQUENCE [LARGE SCALE GENOMIC DNA]</scope>
    <source>
        <strain>ATCC 35089 / DSM 1224 / JCM 13029 / OCM 148 / SB</strain>
    </source>
</reference>
<organism>
    <name type="scientific">Methanococcus vannielii (strain ATCC 35089 / DSM 1224 / JCM 13029 / OCM 148 / SB)</name>
    <dbReference type="NCBI Taxonomy" id="406327"/>
    <lineage>
        <taxon>Archaea</taxon>
        <taxon>Methanobacteriati</taxon>
        <taxon>Methanobacteriota</taxon>
        <taxon>Methanomada group</taxon>
        <taxon>Methanococci</taxon>
        <taxon>Methanococcales</taxon>
        <taxon>Methanococcaceae</taxon>
        <taxon>Methanococcus</taxon>
    </lineage>
</organism>
<keyword id="KW-0004">4Fe-4S</keyword>
<keyword id="KW-0963">Cytoplasm</keyword>
<keyword id="KW-0408">Iron</keyword>
<keyword id="KW-0411">Iron-sulfur</keyword>
<keyword id="KW-0479">Metal-binding</keyword>
<keyword id="KW-0560">Oxidoreductase</keyword>
<sequence length="543" mass="60323">MLCHQCQETIKGTGCTQMGVCGKKDNTANLQDVLIYTLKGIAYVSNKTGITNNEIDSHIVDSLFATITNVNFDDKYIIERIKKGLKLKNDLRTKCGCTPEKCGELPDFVTWDAKNDLEILEKAKSKEISLEIPENEDMRSLRKITLYGIKGLCAYLHHANVLGYNDEEIQKFIKKALIDISDDLKSPEELTALVLETGKYVVDTMALLDKANTESYGNPEITEVNIGVKNNHGILISGHDLKDLEQLLNQTKGTGIDVYTHSEMLPAHYYPAFKKYDNFVGNYGGSWYLQKTEFDSFNGPIVMTTNCLVPPADEYKNRVYVTGVVGYPDVKTIPVNEDGTKDFSKVIEHAKLCKPPKELETGKIVGGFAHNQVLALADKVIDAVKSGAIKKFVVMAGCDGRHKTREYYTDFAKKLPKDAVILTAGCAKYRYNKLDLGDIGGIPRILDAGQCNDCYSLAVIALKLKEAFGLNDVNELPIVYNIAWYEQKAVAVLLALLYLGIQNIHLGPTLPDFISPNVAKLLVEKFKLNGITTVNEDMNLLLE</sequence>
<feature type="chain" id="PRO_1000192562" description="Hydroxylamine reductase">
    <location>
        <begin position="1"/>
        <end position="543"/>
    </location>
</feature>
<feature type="binding site" evidence="1">
    <location>
        <position position="3"/>
    </location>
    <ligand>
        <name>[4Fe-4S] cluster</name>
        <dbReference type="ChEBI" id="CHEBI:49883"/>
    </ligand>
</feature>
<feature type="binding site" evidence="1">
    <location>
        <position position="6"/>
    </location>
    <ligand>
        <name>[4Fe-4S] cluster</name>
        <dbReference type="ChEBI" id="CHEBI:49883"/>
    </ligand>
</feature>
<feature type="binding site" evidence="1">
    <location>
        <position position="15"/>
    </location>
    <ligand>
        <name>[4Fe-4S] cluster</name>
        <dbReference type="ChEBI" id="CHEBI:49883"/>
    </ligand>
</feature>
<feature type="binding site" evidence="1">
    <location>
        <position position="21"/>
    </location>
    <ligand>
        <name>[4Fe-4S] cluster</name>
        <dbReference type="ChEBI" id="CHEBI:49883"/>
    </ligand>
</feature>
<feature type="binding site" evidence="1">
    <location>
        <position position="239"/>
    </location>
    <ligand>
        <name>hybrid [4Fe-2O-2S] cluster</name>
        <dbReference type="ChEBI" id="CHEBI:60519"/>
    </ligand>
</feature>
<feature type="binding site" evidence="1">
    <location>
        <position position="263"/>
    </location>
    <ligand>
        <name>hybrid [4Fe-2O-2S] cluster</name>
        <dbReference type="ChEBI" id="CHEBI:60519"/>
    </ligand>
</feature>
<feature type="binding site" evidence="1">
    <location>
        <position position="307"/>
    </location>
    <ligand>
        <name>hybrid [4Fe-2O-2S] cluster</name>
        <dbReference type="ChEBI" id="CHEBI:60519"/>
    </ligand>
</feature>
<feature type="binding site" description="via persulfide group" evidence="1">
    <location>
        <position position="398"/>
    </location>
    <ligand>
        <name>hybrid [4Fe-2O-2S] cluster</name>
        <dbReference type="ChEBI" id="CHEBI:60519"/>
    </ligand>
</feature>
<feature type="binding site" evidence="1">
    <location>
        <position position="426"/>
    </location>
    <ligand>
        <name>hybrid [4Fe-2O-2S] cluster</name>
        <dbReference type="ChEBI" id="CHEBI:60519"/>
    </ligand>
</feature>
<feature type="binding site" evidence="1">
    <location>
        <position position="451"/>
    </location>
    <ligand>
        <name>hybrid [4Fe-2O-2S] cluster</name>
        <dbReference type="ChEBI" id="CHEBI:60519"/>
    </ligand>
</feature>
<feature type="binding site" evidence="1">
    <location>
        <position position="486"/>
    </location>
    <ligand>
        <name>hybrid [4Fe-2O-2S] cluster</name>
        <dbReference type="ChEBI" id="CHEBI:60519"/>
    </ligand>
</feature>
<feature type="binding site" evidence="1">
    <location>
        <position position="488"/>
    </location>
    <ligand>
        <name>hybrid [4Fe-2O-2S] cluster</name>
        <dbReference type="ChEBI" id="CHEBI:60519"/>
    </ligand>
</feature>
<feature type="modified residue" description="Cysteine persulfide" evidence="1">
    <location>
        <position position="398"/>
    </location>
</feature>
<accession>A6USL5</accession>
<gene>
    <name evidence="1" type="primary">hcp</name>
    <name type="ordered locus">Mevan_1595</name>
</gene>
<protein>
    <recommendedName>
        <fullName evidence="1">Hydroxylamine reductase</fullName>
        <ecNumber evidence="1">1.7.99.1</ecNumber>
    </recommendedName>
    <alternativeName>
        <fullName evidence="1">Hybrid-cluster protein</fullName>
        <shortName evidence="1">HCP</shortName>
    </alternativeName>
    <alternativeName>
        <fullName evidence="1">Prismane protein</fullName>
    </alternativeName>
</protein>
<proteinExistence type="inferred from homology"/>
<name>HCP_METVS</name>